<keyword id="KW-0963">Cytoplasm</keyword>
<keyword id="KW-0489">Methyltransferase</keyword>
<keyword id="KW-0698">rRNA processing</keyword>
<keyword id="KW-0949">S-adenosyl-L-methionine</keyword>
<keyword id="KW-0808">Transferase</keyword>
<comment type="function">
    <text evidence="1">Specifically methylates the N7 position of a guanine in 16S rRNA.</text>
</comment>
<comment type="subcellular location">
    <subcellularLocation>
        <location evidence="1">Cytoplasm</location>
    </subcellularLocation>
</comment>
<comment type="similarity">
    <text evidence="1">Belongs to the methyltransferase superfamily. RNA methyltransferase RsmG family.</text>
</comment>
<proteinExistence type="inferred from homology"/>
<evidence type="ECO:0000255" key="1">
    <source>
        <dbReference type="HAMAP-Rule" id="MF_00074"/>
    </source>
</evidence>
<feature type="chain" id="PRO_1000118182" description="Ribosomal RNA small subunit methyltransferase G">
    <location>
        <begin position="1"/>
        <end position="238"/>
    </location>
</feature>
<feature type="binding site" evidence="1">
    <location>
        <position position="79"/>
    </location>
    <ligand>
        <name>S-adenosyl-L-methionine</name>
        <dbReference type="ChEBI" id="CHEBI:59789"/>
    </ligand>
</feature>
<feature type="binding site" evidence="1">
    <location>
        <position position="84"/>
    </location>
    <ligand>
        <name>S-adenosyl-L-methionine</name>
        <dbReference type="ChEBI" id="CHEBI:59789"/>
    </ligand>
</feature>
<feature type="binding site" evidence="1">
    <location>
        <begin position="102"/>
        <end position="104"/>
    </location>
    <ligand>
        <name>S-adenosyl-L-methionine</name>
        <dbReference type="ChEBI" id="CHEBI:59789"/>
    </ligand>
</feature>
<feature type="binding site" evidence="1">
    <location>
        <begin position="130"/>
        <end position="131"/>
    </location>
    <ligand>
        <name>S-adenosyl-L-methionine</name>
        <dbReference type="ChEBI" id="CHEBI:59789"/>
    </ligand>
</feature>
<feature type="binding site" evidence="1">
    <location>
        <position position="149"/>
    </location>
    <ligand>
        <name>S-adenosyl-L-methionine</name>
        <dbReference type="ChEBI" id="CHEBI:59789"/>
    </ligand>
</feature>
<accession>B8G6Y3</accession>
<organism>
    <name type="scientific">Chloroflexus aggregans (strain MD-66 / DSM 9485)</name>
    <dbReference type="NCBI Taxonomy" id="326427"/>
    <lineage>
        <taxon>Bacteria</taxon>
        <taxon>Bacillati</taxon>
        <taxon>Chloroflexota</taxon>
        <taxon>Chloroflexia</taxon>
        <taxon>Chloroflexales</taxon>
        <taxon>Chloroflexineae</taxon>
        <taxon>Chloroflexaceae</taxon>
        <taxon>Chloroflexus</taxon>
    </lineage>
</organism>
<reference key="1">
    <citation type="submission" date="2008-12" db="EMBL/GenBank/DDBJ databases">
        <title>Complete sequence of Chloroflexus aggregans DSM 9485.</title>
        <authorList>
            <consortium name="US DOE Joint Genome Institute"/>
            <person name="Lucas S."/>
            <person name="Copeland A."/>
            <person name="Lapidus A."/>
            <person name="Glavina del Rio T."/>
            <person name="Dalin E."/>
            <person name="Tice H."/>
            <person name="Pitluck S."/>
            <person name="Foster B."/>
            <person name="Larimer F."/>
            <person name="Land M."/>
            <person name="Hauser L."/>
            <person name="Kyrpides N."/>
            <person name="Mikhailova N."/>
            <person name="Bryant D.A."/>
            <person name="Richardson P."/>
        </authorList>
    </citation>
    <scope>NUCLEOTIDE SEQUENCE [LARGE SCALE GENOMIC DNA]</scope>
    <source>
        <strain>MD-66 / DSM 9485</strain>
    </source>
</reference>
<name>RSMG_CHLAD</name>
<protein>
    <recommendedName>
        <fullName evidence="1">Ribosomal RNA small subunit methyltransferase G</fullName>
        <ecNumber evidence="1">2.1.1.-</ecNumber>
    </recommendedName>
    <alternativeName>
        <fullName evidence="1">16S rRNA 7-methylguanosine methyltransferase</fullName>
        <shortName evidence="1">16S rRNA m7G methyltransferase</shortName>
    </alternativeName>
</protein>
<gene>
    <name evidence="1" type="primary">rsmG</name>
    <name type="ordered locus">Cagg_3084</name>
</gene>
<sequence>MTGNTERLLIETTTAWGIPLSEHQYAQFQRYLDELIIWNDRFNLTAIRDRSAMIRRHLLDSLYLARDWQTAPANLIDIGSGAGFPALPLKIAYPTLPVTLVEATGKKAEFLRHVIECLELTDVRVLHERIETVGRNLAEREQYEVVTARAVAELRVLVEYALPLLRIGGRLLAPKGRDPTDEIAAAQRALHVLGGEVSACEPVHIPGEEPRSLVIITKIAPTPSRFPRAIGIPARRPL</sequence>
<dbReference type="EC" id="2.1.1.-" evidence="1"/>
<dbReference type="EMBL" id="CP001337">
    <property type="protein sequence ID" value="ACL25942.1"/>
    <property type="molecule type" value="Genomic_DNA"/>
</dbReference>
<dbReference type="RefSeq" id="WP_015941794.1">
    <property type="nucleotide sequence ID" value="NC_011831.1"/>
</dbReference>
<dbReference type="SMR" id="B8G6Y3"/>
<dbReference type="STRING" id="326427.Cagg_3084"/>
<dbReference type="KEGG" id="cag:Cagg_3084"/>
<dbReference type="eggNOG" id="COG0357">
    <property type="taxonomic scope" value="Bacteria"/>
</dbReference>
<dbReference type="HOGENOM" id="CLU_065341_0_0_0"/>
<dbReference type="OrthoDB" id="9808773at2"/>
<dbReference type="Proteomes" id="UP000002508">
    <property type="component" value="Chromosome"/>
</dbReference>
<dbReference type="GO" id="GO:0005829">
    <property type="term" value="C:cytosol"/>
    <property type="evidence" value="ECO:0007669"/>
    <property type="project" value="TreeGrafter"/>
</dbReference>
<dbReference type="GO" id="GO:0070043">
    <property type="term" value="F:rRNA (guanine-N7-)-methyltransferase activity"/>
    <property type="evidence" value="ECO:0007669"/>
    <property type="project" value="UniProtKB-UniRule"/>
</dbReference>
<dbReference type="CDD" id="cd02440">
    <property type="entry name" value="AdoMet_MTases"/>
    <property type="match status" value="1"/>
</dbReference>
<dbReference type="FunFam" id="3.40.50.150:FF:000041">
    <property type="entry name" value="Ribosomal RNA small subunit methyltransferase G"/>
    <property type="match status" value="1"/>
</dbReference>
<dbReference type="Gene3D" id="3.40.50.150">
    <property type="entry name" value="Vaccinia Virus protein VP39"/>
    <property type="match status" value="1"/>
</dbReference>
<dbReference type="HAMAP" id="MF_00074">
    <property type="entry name" value="16SrRNA_methyltr_G"/>
    <property type="match status" value="1"/>
</dbReference>
<dbReference type="InterPro" id="IPR003682">
    <property type="entry name" value="rRNA_ssu_MeTfrase_G"/>
</dbReference>
<dbReference type="InterPro" id="IPR029063">
    <property type="entry name" value="SAM-dependent_MTases_sf"/>
</dbReference>
<dbReference type="NCBIfam" id="TIGR00138">
    <property type="entry name" value="rsmG_gidB"/>
    <property type="match status" value="1"/>
</dbReference>
<dbReference type="PANTHER" id="PTHR31760">
    <property type="entry name" value="S-ADENOSYL-L-METHIONINE-DEPENDENT METHYLTRANSFERASES SUPERFAMILY PROTEIN"/>
    <property type="match status" value="1"/>
</dbReference>
<dbReference type="PANTHER" id="PTHR31760:SF0">
    <property type="entry name" value="S-ADENOSYL-L-METHIONINE-DEPENDENT METHYLTRANSFERASES SUPERFAMILY PROTEIN"/>
    <property type="match status" value="1"/>
</dbReference>
<dbReference type="Pfam" id="PF02527">
    <property type="entry name" value="GidB"/>
    <property type="match status" value="1"/>
</dbReference>
<dbReference type="PIRSF" id="PIRSF003078">
    <property type="entry name" value="GidB"/>
    <property type="match status" value="1"/>
</dbReference>
<dbReference type="SUPFAM" id="SSF53335">
    <property type="entry name" value="S-adenosyl-L-methionine-dependent methyltransferases"/>
    <property type="match status" value="1"/>
</dbReference>